<gene>
    <name evidence="1" type="primary">queF</name>
    <name type="ordered locus">Bxeno_A0405</name>
    <name type="ORF">Bxe_A4056</name>
</gene>
<evidence type="ECO:0000255" key="1">
    <source>
        <dbReference type="HAMAP-Rule" id="MF_00817"/>
    </source>
</evidence>
<sequence>MTPEQSPLGKASTYTEQYDASLLFPIARKNAREAIGIGAQLPFFGTDIWNAYELSWLNARGKPQIAVATFFVPADSPNIVESKSFKLYLGSFAQTAFESMDAVRDTIRRDVSASCGATVSVHLTAPYKFGKLQMEEFEGLSLDRLDLDTDVYQPDASLLKAALHEAPVEETVFSNLLKSNCPVTGQPDWGSVQIHYVGPQIDHAGLLRYIISYRNHTGFHEQCVERIFVDVLKACKPVKLAVYARYTRRGGLDINPFRTNYNLPMPDNMRLARQ</sequence>
<keyword id="KW-0963">Cytoplasm</keyword>
<keyword id="KW-0521">NADP</keyword>
<keyword id="KW-0560">Oxidoreductase</keyword>
<keyword id="KW-0671">Queuosine biosynthesis</keyword>
<keyword id="KW-1185">Reference proteome</keyword>
<name>QUEF_PARXL</name>
<reference key="1">
    <citation type="journal article" date="2006" name="Proc. Natl. Acad. Sci. U.S.A.">
        <title>Burkholderia xenovorans LB400 harbors a multi-replicon, 9.73-Mbp genome shaped for versatility.</title>
        <authorList>
            <person name="Chain P.S.G."/>
            <person name="Denef V.J."/>
            <person name="Konstantinidis K.T."/>
            <person name="Vergez L.M."/>
            <person name="Agullo L."/>
            <person name="Reyes V.L."/>
            <person name="Hauser L."/>
            <person name="Cordova M."/>
            <person name="Gomez L."/>
            <person name="Gonzalez M."/>
            <person name="Land M."/>
            <person name="Lao V."/>
            <person name="Larimer F."/>
            <person name="LiPuma J.J."/>
            <person name="Mahenthiralingam E."/>
            <person name="Malfatti S.A."/>
            <person name="Marx C.J."/>
            <person name="Parnell J.J."/>
            <person name="Ramette A."/>
            <person name="Richardson P."/>
            <person name="Seeger M."/>
            <person name="Smith D."/>
            <person name="Spilker T."/>
            <person name="Sul W.J."/>
            <person name="Tsoi T.V."/>
            <person name="Ulrich L.E."/>
            <person name="Zhulin I.B."/>
            <person name="Tiedje J.M."/>
        </authorList>
    </citation>
    <scope>NUCLEOTIDE SEQUENCE [LARGE SCALE GENOMIC DNA]</scope>
    <source>
        <strain>LB400</strain>
    </source>
</reference>
<proteinExistence type="inferred from homology"/>
<comment type="function">
    <text evidence="1">Catalyzes the NADPH-dependent reduction of 7-cyano-7-deazaguanine (preQ0) to 7-aminomethyl-7-deazaguanine (preQ1).</text>
</comment>
<comment type="catalytic activity">
    <reaction evidence="1">
        <text>7-aminomethyl-7-carbaguanine + 2 NADP(+) = 7-cyano-7-deazaguanine + 2 NADPH + 3 H(+)</text>
        <dbReference type="Rhea" id="RHEA:13409"/>
        <dbReference type="ChEBI" id="CHEBI:15378"/>
        <dbReference type="ChEBI" id="CHEBI:45075"/>
        <dbReference type="ChEBI" id="CHEBI:57783"/>
        <dbReference type="ChEBI" id="CHEBI:58349"/>
        <dbReference type="ChEBI" id="CHEBI:58703"/>
        <dbReference type="EC" id="1.7.1.13"/>
    </reaction>
</comment>
<comment type="pathway">
    <text evidence="1">tRNA modification; tRNA-queuosine biosynthesis.</text>
</comment>
<comment type="subunit">
    <text evidence="1">Homodimer.</text>
</comment>
<comment type="subcellular location">
    <subcellularLocation>
        <location evidence="1">Cytoplasm</location>
    </subcellularLocation>
</comment>
<comment type="similarity">
    <text evidence="1">Belongs to the GTP cyclohydrolase I family. QueF type 2 subfamily.</text>
</comment>
<feature type="chain" id="PRO_1000062336" description="NADPH-dependent 7-cyano-7-deazaguanine reductase">
    <location>
        <begin position="1"/>
        <end position="274"/>
    </location>
</feature>
<feature type="active site" description="Thioimide intermediate" evidence="1">
    <location>
        <position position="181"/>
    </location>
</feature>
<feature type="active site" description="Proton donor" evidence="1">
    <location>
        <position position="188"/>
    </location>
</feature>
<feature type="binding site" evidence="1">
    <location>
        <begin position="80"/>
        <end position="82"/>
    </location>
    <ligand>
        <name>substrate</name>
    </ligand>
</feature>
<feature type="binding site" evidence="1">
    <location>
        <begin position="82"/>
        <end position="83"/>
    </location>
    <ligand>
        <name>NADPH</name>
        <dbReference type="ChEBI" id="CHEBI:57783"/>
    </ligand>
</feature>
<feature type="binding site" evidence="1">
    <location>
        <begin position="220"/>
        <end position="221"/>
    </location>
    <ligand>
        <name>substrate</name>
    </ligand>
</feature>
<feature type="binding site" evidence="1">
    <location>
        <begin position="249"/>
        <end position="250"/>
    </location>
    <ligand>
        <name>NADPH</name>
        <dbReference type="ChEBI" id="CHEBI:57783"/>
    </ligand>
</feature>
<accession>Q145P6</accession>
<dbReference type="EC" id="1.7.1.13" evidence="1"/>
<dbReference type="EMBL" id="CP000270">
    <property type="protein sequence ID" value="ABE28943.1"/>
    <property type="molecule type" value="Genomic_DNA"/>
</dbReference>
<dbReference type="RefSeq" id="WP_011486769.1">
    <property type="nucleotide sequence ID" value="NC_007951.1"/>
</dbReference>
<dbReference type="SMR" id="Q145P6"/>
<dbReference type="STRING" id="266265.Bxe_A4056"/>
<dbReference type="KEGG" id="bxb:DR64_1733"/>
<dbReference type="KEGG" id="bxe:Bxe_A4056"/>
<dbReference type="PATRIC" id="fig|266265.5.peg.428"/>
<dbReference type="eggNOG" id="COG0780">
    <property type="taxonomic scope" value="Bacteria"/>
</dbReference>
<dbReference type="eggNOG" id="COG2904">
    <property type="taxonomic scope" value="Bacteria"/>
</dbReference>
<dbReference type="OrthoDB" id="9789995at2"/>
<dbReference type="UniPathway" id="UPA00392"/>
<dbReference type="Proteomes" id="UP000001817">
    <property type="component" value="Chromosome 1"/>
</dbReference>
<dbReference type="GO" id="GO:0005737">
    <property type="term" value="C:cytoplasm"/>
    <property type="evidence" value="ECO:0007669"/>
    <property type="project" value="UniProtKB-SubCell"/>
</dbReference>
<dbReference type="GO" id="GO:0033739">
    <property type="term" value="F:preQ1 synthase activity"/>
    <property type="evidence" value="ECO:0007669"/>
    <property type="project" value="UniProtKB-UniRule"/>
</dbReference>
<dbReference type="GO" id="GO:0008616">
    <property type="term" value="P:queuosine biosynthetic process"/>
    <property type="evidence" value="ECO:0007669"/>
    <property type="project" value="UniProtKB-UniRule"/>
</dbReference>
<dbReference type="GO" id="GO:0006400">
    <property type="term" value="P:tRNA modification"/>
    <property type="evidence" value="ECO:0007669"/>
    <property type="project" value="UniProtKB-UniRule"/>
</dbReference>
<dbReference type="Gene3D" id="3.30.1130.10">
    <property type="match status" value="2"/>
</dbReference>
<dbReference type="HAMAP" id="MF_00817">
    <property type="entry name" value="QueF_type2"/>
    <property type="match status" value="1"/>
</dbReference>
<dbReference type="InterPro" id="IPR043133">
    <property type="entry name" value="GTP-CH-I_C/QueF"/>
</dbReference>
<dbReference type="InterPro" id="IPR050084">
    <property type="entry name" value="NADPH_dep_7-cyano-7-deazaG_red"/>
</dbReference>
<dbReference type="InterPro" id="IPR029500">
    <property type="entry name" value="QueF"/>
</dbReference>
<dbReference type="InterPro" id="IPR029139">
    <property type="entry name" value="QueF_N"/>
</dbReference>
<dbReference type="InterPro" id="IPR016428">
    <property type="entry name" value="QueF_type2"/>
</dbReference>
<dbReference type="NCBIfam" id="TIGR03138">
    <property type="entry name" value="QueF"/>
    <property type="match status" value="1"/>
</dbReference>
<dbReference type="PANTHER" id="PTHR34354">
    <property type="entry name" value="NADPH-DEPENDENT 7-CYANO-7-DEAZAGUANINE REDUCTASE"/>
    <property type="match status" value="1"/>
</dbReference>
<dbReference type="PANTHER" id="PTHR34354:SF1">
    <property type="entry name" value="NADPH-DEPENDENT 7-CYANO-7-DEAZAGUANINE REDUCTASE"/>
    <property type="match status" value="1"/>
</dbReference>
<dbReference type="Pfam" id="PF14489">
    <property type="entry name" value="QueF"/>
    <property type="match status" value="1"/>
</dbReference>
<dbReference type="Pfam" id="PF14819">
    <property type="entry name" value="QueF_N"/>
    <property type="match status" value="1"/>
</dbReference>
<dbReference type="PIRSF" id="PIRSF004750">
    <property type="entry name" value="Nitrile_oxidored_YqcD_prd"/>
    <property type="match status" value="1"/>
</dbReference>
<dbReference type="SUPFAM" id="SSF55620">
    <property type="entry name" value="Tetrahydrobiopterin biosynthesis enzymes-like"/>
    <property type="match status" value="1"/>
</dbReference>
<protein>
    <recommendedName>
        <fullName evidence="1">NADPH-dependent 7-cyano-7-deazaguanine reductase</fullName>
        <ecNumber evidence="1">1.7.1.13</ecNumber>
    </recommendedName>
    <alternativeName>
        <fullName evidence="1">7-cyano-7-carbaguanine reductase</fullName>
    </alternativeName>
    <alternativeName>
        <fullName evidence="1">NADPH-dependent nitrile oxidoreductase</fullName>
    </alternativeName>
    <alternativeName>
        <fullName evidence="1">PreQ(0) reductase</fullName>
    </alternativeName>
</protein>
<organism>
    <name type="scientific">Paraburkholderia xenovorans (strain LB400)</name>
    <dbReference type="NCBI Taxonomy" id="266265"/>
    <lineage>
        <taxon>Bacteria</taxon>
        <taxon>Pseudomonadati</taxon>
        <taxon>Pseudomonadota</taxon>
        <taxon>Betaproteobacteria</taxon>
        <taxon>Burkholderiales</taxon>
        <taxon>Burkholderiaceae</taxon>
        <taxon>Paraburkholderia</taxon>
    </lineage>
</organism>